<dbReference type="EMBL" id="BA000016">
    <property type="protein sequence ID" value="BAB81120.1"/>
    <property type="molecule type" value="Genomic_DNA"/>
</dbReference>
<dbReference type="RefSeq" id="WP_003454663.1">
    <property type="nucleotide sequence ID" value="NC_003366.1"/>
</dbReference>
<dbReference type="STRING" id="195102.gene:10490678"/>
<dbReference type="KEGG" id="cpe:CPE1414"/>
<dbReference type="HOGENOM" id="CLU_128147_0_0_9"/>
<dbReference type="Proteomes" id="UP000000818">
    <property type="component" value="Chromosome"/>
</dbReference>
<dbReference type="CDD" id="cd04888">
    <property type="entry name" value="ACT_PheB-BS"/>
    <property type="match status" value="1"/>
</dbReference>
<dbReference type="Gene3D" id="3.30.70.260">
    <property type="match status" value="1"/>
</dbReference>
<dbReference type="HAMAP" id="MF_00707">
    <property type="entry name" value="UPF0735"/>
    <property type="match status" value="1"/>
</dbReference>
<dbReference type="InterPro" id="IPR045865">
    <property type="entry name" value="ACT-like_dom_sf"/>
</dbReference>
<dbReference type="InterPro" id="IPR002912">
    <property type="entry name" value="ACT_dom"/>
</dbReference>
<dbReference type="InterPro" id="IPR008310">
    <property type="entry name" value="UPF0735_ACT_dom-cont"/>
</dbReference>
<dbReference type="NCBIfam" id="NF003361">
    <property type="entry name" value="PRK04435.1"/>
    <property type="match status" value="1"/>
</dbReference>
<dbReference type="PIRSF" id="PIRSF025624">
    <property type="entry name" value="ACT_PheB"/>
    <property type="match status" value="1"/>
</dbReference>
<dbReference type="SUPFAM" id="SSF55021">
    <property type="entry name" value="ACT-like"/>
    <property type="match status" value="1"/>
</dbReference>
<dbReference type="PROSITE" id="PS51671">
    <property type="entry name" value="ACT"/>
    <property type="match status" value="1"/>
</dbReference>
<proteinExistence type="inferred from homology"/>
<accession>Q8XKI1</accession>
<sequence length="145" mass="16309">MEGNLLVIDKRVLPEVFEKVINAKRLLKEGKVKEITEAAKQAGISRSVYYKYKDYIFEFAETLQGRKVIFNMVVTHEKGVLSSVLNILSDVGGNILTIDQGLPIHGLAHVSFTIDISTMKCDIKEMLNEIELVHGVEKVEFVAME</sequence>
<keyword id="KW-1185">Reference proteome</keyword>
<feature type="chain" id="PRO_0000206470" description="UPF0735 ACT domain-containing protein CPE1414">
    <location>
        <begin position="1"/>
        <end position="145"/>
    </location>
</feature>
<feature type="domain" description="ACT" evidence="1">
    <location>
        <begin position="69"/>
        <end position="144"/>
    </location>
</feature>
<organism>
    <name type="scientific">Clostridium perfringens (strain 13 / Type A)</name>
    <dbReference type="NCBI Taxonomy" id="195102"/>
    <lineage>
        <taxon>Bacteria</taxon>
        <taxon>Bacillati</taxon>
        <taxon>Bacillota</taxon>
        <taxon>Clostridia</taxon>
        <taxon>Eubacteriales</taxon>
        <taxon>Clostridiaceae</taxon>
        <taxon>Clostridium</taxon>
    </lineage>
</organism>
<comment type="similarity">
    <text evidence="1">Belongs to the UPF0735 family.</text>
</comment>
<name>Y1414_CLOPE</name>
<evidence type="ECO:0000255" key="1">
    <source>
        <dbReference type="HAMAP-Rule" id="MF_00707"/>
    </source>
</evidence>
<gene>
    <name type="ordered locus">CPE1414</name>
</gene>
<reference key="1">
    <citation type="journal article" date="2002" name="Proc. Natl. Acad. Sci. U.S.A.">
        <title>Complete genome sequence of Clostridium perfringens, an anaerobic flesh-eater.</title>
        <authorList>
            <person name="Shimizu T."/>
            <person name="Ohtani K."/>
            <person name="Hirakawa H."/>
            <person name="Ohshima K."/>
            <person name="Yamashita A."/>
            <person name="Shiba T."/>
            <person name="Ogasawara N."/>
            <person name="Hattori M."/>
            <person name="Kuhara S."/>
            <person name="Hayashi H."/>
        </authorList>
    </citation>
    <scope>NUCLEOTIDE SEQUENCE [LARGE SCALE GENOMIC DNA]</scope>
    <source>
        <strain>13 / Type A</strain>
    </source>
</reference>
<protein>
    <recommendedName>
        <fullName evidence="1">UPF0735 ACT domain-containing protein CPE1414</fullName>
    </recommendedName>
</protein>